<dbReference type="EMBL" id="AK007505">
    <property type="protein sequence ID" value="BAB25076.1"/>
    <property type="molecule type" value="mRNA"/>
</dbReference>
<dbReference type="EMBL" id="AK150298">
    <property type="protein sequence ID" value="BAE29450.1"/>
    <property type="molecule type" value="mRNA"/>
</dbReference>
<dbReference type="EMBL" id="AK151381">
    <property type="protein sequence ID" value="BAE30353.1"/>
    <property type="molecule type" value="mRNA"/>
</dbReference>
<dbReference type="EMBL" id="AK160336">
    <property type="protein sequence ID" value="BAE35743.1"/>
    <property type="molecule type" value="mRNA"/>
</dbReference>
<dbReference type="EMBL" id="AK167951">
    <property type="protein sequence ID" value="BAE39952.1"/>
    <property type="molecule type" value="mRNA"/>
</dbReference>
<dbReference type="EMBL" id="BC016463">
    <property type="protein sequence ID" value="AAH16463.1"/>
    <property type="molecule type" value="mRNA"/>
</dbReference>
<dbReference type="CCDS" id="CCDS27849.1"/>
<dbReference type="RefSeq" id="NP_001405270.1">
    <property type="nucleotide sequence ID" value="NM_001418341.1"/>
</dbReference>
<dbReference type="RefSeq" id="NP_080842.1">
    <property type="nucleotide sequence ID" value="NM_026566.3"/>
</dbReference>
<dbReference type="RefSeq" id="XP_006521373.1">
    <property type="nucleotide sequence ID" value="XM_006521310.3"/>
</dbReference>
<dbReference type="SMR" id="Q9D8Z6"/>
<dbReference type="BioGRID" id="212665">
    <property type="interactions" value="2"/>
</dbReference>
<dbReference type="ComplexPortal" id="CPX-380">
    <property type="entry name" value="ULK1-ATG13-RB1CC1-ATG101 autophagy initiation complex"/>
</dbReference>
<dbReference type="FunCoup" id="Q9D8Z6">
    <property type="interactions" value="316"/>
</dbReference>
<dbReference type="IntAct" id="Q9D8Z6">
    <property type="interactions" value="1"/>
</dbReference>
<dbReference type="STRING" id="10090.ENSMUSP00000045474"/>
<dbReference type="iPTMnet" id="Q9D8Z6"/>
<dbReference type="PhosphoSitePlus" id="Q9D8Z6"/>
<dbReference type="PaxDb" id="10090-ENSMUSP00000045474"/>
<dbReference type="PeptideAtlas" id="Q9D8Z6"/>
<dbReference type="ProteomicsDB" id="265165"/>
<dbReference type="Pumba" id="Q9D8Z6"/>
<dbReference type="Antibodypedia" id="43032">
    <property type="antibodies" value="86 antibodies from 26 providers"/>
</dbReference>
<dbReference type="DNASU" id="68118"/>
<dbReference type="Ensembl" id="ENSMUST00000048393.8">
    <property type="protein sequence ID" value="ENSMUSP00000045474.7"/>
    <property type="gene ID" value="ENSMUSG00000037204.8"/>
</dbReference>
<dbReference type="GeneID" id="68118"/>
<dbReference type="KEGG" id="mmu:68118"/>
<dbReference type="UCSC" id="uc007xsw.1">
    <property type="organism name" value="mouse"/>
</dbReference>
<dbReference type="AGR" id="MGI:1915368"/>
<dbReference type="CTD" id="60673"/>
<dbReference type="MGI" id="MGI:1915368">
    <property type="gene designation" value="Atg101"/>
</dbReference>
<dbReference type="VEuPathDB" id="HostDB:ENSMUSG00000037204"/>
<dbReference type="eggNOG" id="KOG4493">
    <property type="taxonomic scope" value="Eukaryota"/>
</dbReference>
<dbReference type="GeneTree" id="ENSGT00390000016511"/>
<dbReference type="HOGENOM" id="CLU_110397_0_0_1"/>
<dbReference type="InParanoid" id="Q9D8Z6"/>
<dbReference type="OMA" id="TMNCRSE"/>
<dbReference type="OrthoDB" id="10259639at2759"/>
<dbReference type="PhylomeDB" id="Q9D8Z6"/>
<dbReference type="TreeFam" id="TF320996"/>
<dbReference type="Reactome" id="R-MMU-1632852">
    <property type="pathway name" value="Macroautophagy"/>
</dbReference>
<dbReference type="BioGRID-ORCS" id="68118">
    <property type="hits" value="20 hits in 76 CRISPR screens"/>
</dbReference>
<dbReference type="ChiTaRS" id="Atg101">
    <property type="organism name" value="mouse"/>
</dbReference>
<dbReference type="PRO" id="PR:Q9D8Z6"/>
<dbReference type="Proteomes" id="UP000000589">
    <property type="component" value="Chromosome 15"/>
</dbReference>
<dbReference type="RNAct" id="Q9D8Z6">
    <property type="molecule type" value="protein"/>
</dbReference>
<dbReference type="Bgee" id="ENSMUSG00000037204">
    <property type="expression patterns" value="Expressed in granulocyte and 237 other cell types or tissues"/>
</dbReference>
<dbReference type="ExpressionAtlas" id="Q9D8Z6">
    <property type="expression patterns" value="baseline and differential"/>
</dbReference>
<dbReference type="GO" id="GO:1990316">
    <property type="term" value="C:Atg1/ULK1 kinase complex"/>
    <property type="evidence" value="ECO:0000266"/>
    <property type="project" value="ComplexPortal"/>
</dbReference>
<dbReference type="GO" id="GO:0000407">
    <property type="term" value="C:phagophore assembly site"/>
    <property type="evidence" value="ECO:0000314"/>
    <property type="project" value="ComplexPortal"/>
</dbReference>
<dbReference type="GO" id="GO:0042802">
    <property type="term" value="F:identical protein binding"/>
    <property type="evidence" value="ECO:0007669"/>
    <property type="project" value="Ensembl"/>
</dbReference>
<dbReference type="GO" id="GO:0044877">
    <property type="term" value="F:protein-containing complex binding"/>
    <property type="evidence" value="ECO:0007669"/>
    <property type="project" value="Ensembl"/>
</dbReference>
<dbReference type="GO" id="GO:0000045">
    <property type="term" value="P:autophagosome assembly"/>
    <property type="evidence" value="ECO:0000314"/>
    <property type="project" value="ComplexPortal"/>
</dbReference>
<dbReference type="GO" id="GO:0008285">
    <property type="term" value="P:negative regulation of cell population proliferation"/>
    <property type="evidence" value="ECO:0000314"/>
    <property type="project" value="ComplexPortal"/>
</dbReference>
<dbReference type="GO" id="GO:0010508">
    <property type="term" value="P:positive regulation of autophagy"/>
    <property type="evidence" value="ECO:0000314"/>
    <property type="project" value="ComplexPortal"/>
</dbReference>
<dbReference type="InterPro" id="IPR012445">
    <property type="entry name" value="ATG101"/>
</dbReference>
<dbReference type="PANTHER" id="PTHR13292">
    <property type="entry name" value="AUTOPHAGY-RELATED PROTEIN 101"/>
    <property type="match status" value="1"/>
</dbReference>
<dbReference type="PANTHER" id="PTHR13292:SF0">
    <property type="entry name" value="AUTOPHAGY-RELATED PROTEIN 101"/>
    <property type="match status" value="1"/>
</dbReference>
<dbReference type="Pfam" id="PF07855">
    <property type="entry name" value="ATG101"/>
    <property type="match status" value="1"/>
</dbReference>
<protein>
    <recommendedName>
        <fullName>Autophagy-related protein 101</fullName>
    </recommendedName>
</protein>
<evidence type="ECO:0000250" key="1">
    <source>
        <dbReference type="UniProtKB" id="Q9BSB4"/>
    </source>
</evidence>
<evidence type="ECO:0000305" key="2"/>
<proteinExistence type="evidence at protein level"/>
<organism>
    <name type="scientific">Mus musculus</name>
    <name type="common">Mouse</name>
    <dbReference type="NCBI Taxonomy" id="10090"/>
    <lineage>
        <taxon>Eukaryota</taxon>
        <taxon>Metazoa</taxon>
        <taxon>Chordata</taxon>
        <taxon>Craniata</taxon>
        <taxon>Vertebrata</taxon>
        <taxon>Euteleostomi</taxon>
        <taxon>Mammalia</taxon>
        <taxon>Eutheria</taxon>
        <taxon>Euarchontoglires</taxon>
        <taxon>Glires</taxon>
        <taxon>Rodentia</taxon>
        <taxon>Myomorpha</taxon>
        <taxon>Muroidea</taxon>
        <taxon>Muridae</taxon>
        <taxon>Murinae</taxon>
        <taxon>Mus</taxon>
        <taxon>Mus</taxon>
    </lineage>
</organism>
<keyword id="KW-0072">Autophagy</keyword>
<keyword id="KW-0963">Cytoplasm</keyword>
<keyword id="KW-1185">Reference proteome</keyword>
<name>ATGA1_MOUSE</name>
<accession>Q9D8Z6</accession>
<sequence length="218" mass="25002">MNCRSEVLEVSVEGRQVEEAMLAVLHTVLLHRSTGKFHYKKEGTYSIGTVGIQDVDCDFIDFTYVRVSSEELDRALRKVVGEFKDALRNSGGDGLGQMSLEFYQKKKSRWPFSDECIPWEVWTVKVHVVALATEQERQICREKVGEKLCEKIINIVEVMSRHEYLPKMPTQSEVDNVFDTGLRDVQPYLYKISFQITEALGTSVTTTMRRLIKDTLAL</sequence>
<comment type="function">
    <text evidence="1">Autophagy factor required for autophagosome formation. Stabilizes ATG13, protecting it from proteasomal degradation.</text>
</comment>
<comment type="subunit">
    <text evidence="1">Interacts with ATG13. Associates with a complex composed of ATG13, ULK1 and RB1CC1; the association with this complex requires the presence of ATG13.</text>
</comment>
<comment type="subcellular location">
    <subcellularLocation>
        <location evidence="1">Cytoplasm</location>
    </subcellularLocation>
    <subcellularLocation>
        <location evidence="1">Preautophagosomal structure</location>
    </subcellularLocation>
    <text evidence="1">Under starvation conditions, it is localized to puncate structures primarily representing the isolation membrane; the isolation membrane sequesters a portion of the cytoplasm resulting in autophagosome formation.</text>
</comment>
<comment type="similarity">
    <text evidence="2">Belongs to the ATG101 family.</text>
</comment>
<feature type="chain" id="PRO_0000294323" description="Autophagy-related protein 101">
    <location>
        <begin position="1"/>
        <end position="218"/>
    </location>
</feature>
<feature type="region of interest" description="Important for interaction with ATG13" evidence="1">
    <location>
        <begin position="152"/>
        <end position="156"/>
    </location>
</feature>
<reference key="1">
    <citation type="journal article" date="2005" name="Science">
        <title>The transcriptional landscape of the mammalian genome.</title>
        <authorList>
            <person name="Carninci P."/>
            <person name="Kasukawa T."/>
            <person name="Katayama S."/>
            <person name="Gough J."/>
            <person name="Frith M.C."/>
            <person name="Maeda N."/>
            <person name="Oyama R."/>
            <person name="Ravasi T."/>
            <person name="Lenhard B."/>
            <person name="Wells C."/>
            <person name="Kodzius R."/>
            <person name="Shimokawa K."/>
            <person name="Bajic V.B."/>
            <person name="Brenner S.E."/>
            <person name="Batalov S."/>
            <person name="Forrest A.R."/>
            <person name="Zavolan M."/>
            <person name="Davis M.J."/>
            <person name="Wilming L.G."/>
            <person name="Aidinis V."/>
            <person name="Allen J.E."/>
            <person name="Ambesi-Impiombato A."/>
            <person name="Apweiler R."/>
            <person name="Aturaliya R.N."/>
            <person name="Bailey T.L."/>
            <person name="Bansal M."/>
            <person name="Baxter L."/>
            <person name="Beisel K.W."/>
            <person name="Bersano T."/>
            <person name="Bono H."/>
            <person name="Chalk A.M."/>
            <person name="Chiu K.P."/>
            <person name="Choudhary V."/>
            <person name="Christoffels A."/>
            <person name="Clutterbuck D.R."/>
            <person name="Crowe M.L."/>
            <person name="Dalla E."/>
            <person name="Dalrymple B.P."/>
            <person name="de Bono B."/>
            <person name="Della Gatta G."/>
            <person name="di Bernardo D."/>
            <person name="Down T."/>
            <person name="Engstrom P."/>
            <person name="Fagiolini M."/>
            <person name="Faulkner G."/>
            <person name="Fletcher C.F."/>
            <person name="Fukushima T."/>
            <person name="Furuno M."/>
            <person name="Futaki S."/>
            <person name="Gariboldi M."/>
            <person name="Georgii-Hemming P."/>
            <person name="Gingeras T.R."/>
            <person name="Gojobori T."/>
            <person name="Green R.E."/>
            <person name="Gustincich S."/>
            <person name="Harbers M."/>
            <person name="Hayashi Y."/>
            <person name="Hensch T.K."/>
            <person name="Hirokawa N."/>
            <person name="Hill D."/>
            <person name="Huminiecki L."/>
            <person name="Iacono M."/>
            <person name="Ikeo K."/>
            <person name="Iwama A."/>
            <person name="Ishikawa T."/>
            <person name="Jakt M."/>
            <person name="Kanapin A."/>
            <person name="Katoh M."/>
            <person name="Kawasawa Y."/>
            <person name="Kelso J."/>
            <person name="Kitamura H."/>
            <person name="Kitano H."/>
            <person name="Kollias G."/>
            <person name="Krishnan S.P."/>
            <person name="Kruger A."/>
            <person name="Kummerfeld S.K."/>
            <person name="Kurochkin I.V."/>
            <person name="Lareau L.F."/>
            <person name="Lazarevic D."/>
            <person name="Lipovich L."/>
            <person name="Liu J."/>
            <person name="Liuni S."/>
            <person name="McWilliam S."/>
            <person name="Madan Babu M."/>
            <person name="Madera M."/>
            <person name="Marchionni L."/>
            <person name="Matsuda H."/>
            <person name="Matsuzawa S."/>
            <person name="Miki H."/>
            <person name="Mignone F."/>
            <person name="Miyake S."/>
            <person name="Morris K."/>
            <person name="Mottagui-Tabar S."/>
            <person name="Mulder N."/>
            <person name="Nakano N."/>
            <person name="Nakauchi H."/>
            <person name="Ng P."/>
            <person name="Nilsson R."/>
            <person name="Nishiguchi S."/>
            <person name="Nishikawa S."/>
            <person name="Nori F."/>
            <person name="Ohara O."/>
            <person name="Okazaki Y."/>
            <person name="Orlando V."/>
            <person name="Pang K.C."/>
            <person name="Pavan W.J."/>
            <person name="Pavesi G."/>
            <person name="Pesole G."/>
            <person name="Petrovsky N."/>
            <person name="Piazza S."/>
            <person name="Reed J."/>
            <person name="Reid J.F."/>
            <person name="Ring B.Z."/>
            <person name="Ringwald M."/>
            <person name="Rost B."/>
            <person name="Ruan Y."/>
            <person name="Salzberg S.L."/>
            <person name="Sandelin A."/>
            <person name="Schneider C."/>
            <person name="Schoenbach C."/>
            <person name="Sekiguchi K."/>
            <person name="Semple C.A."/>
            <person name="Seno S."/>
            <person name="Sessa L."/>
            <person name="Sheng Y."/>
            <person name="Shibata Y."/>
            <person name="Shimada H."/>
            <person name="Shimada K."/>
            <person name="Silva D."/>
            <person name="Sinclair B."/>
            <person name="Sperling S."/>
            <person name="Stupka E."/>
            <person name="Sugiura K."/>
            <person name="Sultana R."/>
            <person name="Takenaka Y."/>
            <person name="Taki K."/>
            <person name="Tammoja K."/>
            <person name="Tan S.L."/>
            <person name="Tang S."/>
            <person name="Taylor M.S."/>
            <person name="Tegner J."/>
            <person name="Teichmann S.A."/>
            <person name="Ueda H.R."/>
            <person name="van Nimwegen E."/>
            <person name="Verardo R."/>
            <person name="Wei C.L."/>
            <person name="Yagi K."/>
            <person name="Yamanishi H."/>
            <person name="Zabarovsky E."/>
            <person name="Zhu S."/>
            <person name="Zimmer A."/>
            <person name="Hide W."/>
            <person name="Bult C."/>
            <person name="Grimmond S.M."/>
            <person name="Teasdale R.D."/>
            <person name="Liu E.T."/>
            <person name="Brusic V."/>
            <person name="Quackenbush J."/>
            <person name="Wahlestedt C."/>
            <person name="Mattick J.S."/>
            <person name="Hume D.A."/>
            <person name="Kai C."/>
            <person name="Sasaki D."/>
            <person name="Tomaru Y."/>
            <person name="Fukuda S."/>
            <person name="Kanamori-Katayama M."/>
            <person name="Suzuki M."/>
            <person name="Aoki J."/>
            <person name="Arakawa T."/>
            <person name="Iida J."/>
            <person name="Imamura K."/>
            <person name="Itoh M."/>
            <person name="Kato T."/>
            <person name="Kawaji H."/>
            <person name="Kawagashira N."/>
            <person name="Kawashima T."/>
            <person name="Kojima M."/>
            <person name="Kondo S."/>
            <person name="Konno H."/>
            <person name="Nakano K."/>
            <person name="Ninomiya N."/>
            <person name="Nishio T."/>
            <person name="Okada M."/>
            <person name="Plessy C."/>
            <person name="Shibata K."/>
            <person name="Shiraki T."/>
            <person name="Suzuki S."/>
            <person name="Tagami M."/>
            <person name="Waki K."/>
            <person name="Watahiki A."/>
            <person name="Okamura-Oho Y."/>
            <person name="Suzuki H."/>
            <person name="Kawai J."/>
            <person name="Hayashizaki Y."/>
        </authorList>
    </citation>
    <scope>NUCLEOTIDE SEQUENCE [LARGE SCALE MRNA]</scope>
    <source>
        <strain>C57BL/6J</strain>
        <strain>DBA/2J</strain>
        <tissue>Bone marrow</tissue>
        <tissue>Embryo</tissue>
        <tissue>Pancreas</tissue>
    </source>
</reference>
<reference key="2">
    <citation type="journal article" date="2004" name="Genome Res.">
        <title>The status, quality, and expansion of the NIH full-length cDNA project: the Mammalian Gene Collection (MGC).</title>
        <authorList>
            <consortium name="The MGC Project Team"/>
        </authorList>
    </citation>
    <scope>NUCLEOTIDE SEQUENCE [LARGE SCALE MRNA]</scope>
    <source>
        <strain>FVB/N</strain>
        <tissue>Salivary gland</tissue>
    </source>
</reference>
<reference key="3">
    <citation type="journal article" date="2010" name="Cell">
        <title>A tissue-specific atlas of mouse protein phosphorylation and expression.</title>
        <authorList>
            <person name="Huttlin E.L."/>
            <person name="Jedrychowski M.P."/>
            <person name="Elias J.E."/>
            <person name="Goswami T."/>
            <person name="Rad R."/>
            <person name="Beausoleil S.A."/>
            <person name="Villen J."/>
            <person name="Haas W."/>
            <person name="Sowa M.E."/>
            <person name="Gygi S.P."/>
        </authorList>
    </citation>
    <scope>IDENTIFICATION BY MASS SPECTROMETRY [LARGE SCALE ANALYSIS]</scope>
    <source>
        <tissue>Brain</tissue>
        <tissue>Spleen</tissue>
        <tissue>Testis</tissue>
    </source>
</reference>
<gene>
    <name type="primary">Atg101</name>
</gene>